<reference key="1">
    <citation type="journal article" date="2006" name="BMC Genomics">
        <title>Complete genome sequence of Shigella flexneri 5b and comparison with Shigella flexneri 2a.</title>
        <authorList>
            <person name="Nie H."/>
            <person name="Yang F."/>
            <person name="Zhang X."/>
            <person name="Yang J."/>
            <person name="Chen L."/>
            <person name="Wang J."/>
            <person name="Xiong Z."/>
            <person name="Peng J."/>
            <person name="Sun L."/>
            <person name="Dong J."/>
            <person name="Xue Y."/>
            <person name="Xu X."/>
            <person name="Chen S."/>
            <person name="Yao Z."/>
            <person name="Shen Y."/>
            <person name="Jin Q."/>
        </authorList>
    </citation>
    <scope>NUCLEOTIDE SEQUENCE [LARGE SCALE GENOMIC DNA]</scope>
    <source>
        <strain>8401</strain>
    </source>
</reference>
<accession>Q0T0I4</accession>
<gene>
    <name evidence="1" type="primary">rlmG</name>
    <name type="ordered locus">SFV_3126</name>
</gene>
<proteinExistence type="inferred from homology"/>
<protein>
    <recommendedName>
        <fullName evidence="1">Ribosomal RNA large subunit methyltransferase G</fullName>
        <ecNumber evidence="1">2.1.1.174</ecNumber>
    </recommendedName>
    <alternativeName>
        <fullName evidence="1">23S rRNA m2G1835 methyltransferase</fullName>
    </alternativeName>
    <alternativeName>
        <fullName evidence="1">rRNA (guanine-N(2)-)-methyltransferase RlmG</fullName>
    </alternativeName>
</protein>
<organism>
    <name type="scientific">Shigella flexneri serotype 5b (strain 8401)</name>
    <dbReference type="NCBI Taxonomy" id="373384"/>
    <lineage>
        <taxon>Bacteria</taxon>
        <taxon>Pseudomonadati</taxon>
        <taxon>Pseudomonadota</taxon>
        <taxon>Gammaproteobacteria</taxon>
        <taxon>Enterobacterales</taxon>
        <taxon>Enterobacteriaceae</taxon>
        <taxon>Shigella</taxon>
    </lineage>
</organism>
<feature type="chain" id="PRO_0000366525" description="Ribosomal RNA large subunit methyltransferase G">
    <location>
        <begin position="1"/>
        <end position="378"/>
    </location>
</feature>
<sequence length="378" mass="42251">MSHLDNGFRSLTLQRFPATDDVNPLQAWEAADEYLLQQLDDTEIPGPVLILNDAFGALSCALAEHKPYSIGDSYISELATRENLRLNGIDESSVKFLDSTADYPQQPGVVLIKVPKTLALLEQQLRALRKVVTSDTRIIAGAKARDIHTSTLELFEKVLGPTTTTLAWKKARLINCTFNEPPLADAPQTVSWKLEGTDWTIHNHANVFSRTGLDIGARFFMQHLPENLEGEIVDLGCGNGVIGLTLLDKNPQAKVVFVDESPMAVASSRLNVETNMPEALDRSEFMINNALSGVEPFRFNAVLCNPPFHQQHALTDNVAWEMFHYARRCLKINGELYIVANRHLDYFHKLKKIFGNCTTIATNNKFVVLKAVKLGRRR</sequence>
<dbReference type="EC" id="2.1.1.174" evidence="1"/>
<dbReference type="EMBL" id="CP000266">
    <property type="protein sequence ID" value="ABF05182.1"/>
    <property type="status" value="ALT_INIT"/>
    <property type="molecule type" value="Genomic_DNA"/>
</dbReference>
<dbReference type="RefSeq" id="WP_000018658.1">
    <property type="nucleotide sequence ID" value="NC_008258.1"/>
</dbReference>
<dbReference type="SMR" id="Q0T0I4"/>
<dbReference type="KEGG" id="sfv:SFV_3126"/>
<dbReference type="HOGENOM" id="CLU_040288_4_0_6"/>
<dbReference type="BRENDA" id="2.1.1.174">
    <property type="organism ID" value="2026"/>
</dbReference>
<dbReference type="Proteomes" id="UP000000659">
    <property type="component" value="Chromosome"/>
</dbReference>
<dbReference type="GO" id="GO:0005737">
    <property type="term" value="C:cytoplasm"/>
    <property type="evidence" value="ECO:0007669"/>
    <property type="project" value="UniProtKB-SubCell"/>
</dbReference>
<dbReference type="GO" id="GO:0052916">
    <property type="term" value="F:23S rRNA (guanine(1835)-N(2))-methyltransferase activity"/>
    <property type="evidence" value="ECO:0007669"/>
    <property type="project" value="UniProtKB-EC"/>
</dbReference>
<dbReference type="GO" id="GO:0003676">
    <property type="term" value="F:nucleic acid binding"/>
    <property type="evidence" value="ECO:0007669"/>
    <property type="project" value="InterPro"/>
</dbReference>
<dbReference type="CDD" id="cd02440">
    <property type="entry name" value="AdoMet_MTases"/>
    <property type="match status" value="1"/>
</dbReference>
<dbReference type="FunFam" id="3.40.50.150:FF:000046">
    <property type="entry name" value="Ribosomal RNA large subunit methyltransferase G"/>
    <property type="match status" value="1"/>
</dbReference>
<dbReference type="FunFam" id="3.40.50.150:FF:000047">
    <property type="entry name" value="Ribosomal RNA large subunit methyltransferase G"/>
    <property type="match status" value="1"/>
</dbReference>
<dbReference type="Gene3D" id="3.40.50.150">
    <property type="entry name" value="Vaccinia Virus protein VP39"/>
    <property type="match status" value="2"/>
</dbReference>
<dbReference type="HAMAP" id="MF_01859">
    <property type="entry name" value="23SrRNA_methyltr_G"/>
    <property type="match status" value="1"/>
</dbReference>
<dbReference type="InterPro" id="IPR002052">
    <property type="entry name" value="DNA_methylase_N6_adenine_CS"/>
</dbReference>
<dbReference type="InterPro" id="IPR017237">
    <property type="entry name" value="rRNA_m2G-MeTrfase_RlmG"/>
</dbReference>
<dbReference type="InterPro" id="IPR046977">
    <property type="entry name" value="RsmC/RlmG"/>
</dbReference>
<dbReference type="InterPro" id="IPR029063">
    <property type="entry name" value="SAM-dependent_MTases_sf"/>
</dbReference>
<dbReference type="InterPro" id="IPR007848">
    <property type="entry name" value="Small_mtfrase_dom"/>
</dbReference>
<dbReference type="NCBIfam" id="NF011577">
    <property type="entry name" value="PRK15001.1"/>
    <property type="match status" value="1"/>
</dbReference>
<dbReference type="PANTHER" id="PTHR47816:SF5">
    <property type="entry name" value="RIBOSOMAL RNA LARGE SUBUNIT METHYLTRANSFERASE G"/>
    <property type="match status" value="1"/>
</dbReference>
<dbReference type="PANTHER" id="PTHR47816">
    <property type="entry name" value="RIBOSOMAL RNA SMALL SUBUNIT METHYLTRANSFERASE C"/>
    <property type="match status" value="1"/>
</dbReference>
<dbReference type="Pfam" id="PF05175">
    <property type="entry name" value="MTS"/>
    <property type="match status" value="1"/>
</dbReference>
<dbReference type="PIRSF" id="PIRSF037565">
    <property type="entry name" value="RRNA_m2G_Mtase_RsmD_prd"/>
    <property type="match status" value="1"/>
</dbReference>
<dbReference type="SUPFAM" id="SSF53335">
    <property type="entry name" value="S-adenosyl-L-methionine-dependent methyltransferases"/>
    <property type="match status" value="1"/>
</dbReference>
<name>RLMG_SHIF8</name>
<comment type="function">
    <text evidence="1">Specifically methylates the guanine in position 1835 (m2G1835) of 23S rRNA.</text>
</comment>
<comment type="catalytic activity">
    <reaction evidence="1">
        <text>guanosine(1835) in 23S rRNA + S-adenosyl-L-methionine = N(2)-methylguanosine(1835) in 23S rRNA + S-adenosyl-L-homocysteine + H(+)</text>
        <dbReference type="Rhea" id="RHEA:42744"/>
        <dbReference type="Rhea" id="RHEA-COMP:10217"/>
        <dbReference type="Rhea" id="RHEA-COMP:10218"/>
        <dbReference type="ChEBI" id="CHEBI:15378"/>
        <dbReference type="ChEBI" id="CHEBI:57856"/>
        <dbReference type="ChEBI" id="CHEBI:59789"/>
        <dbReference type="ChEBI" id="CHEBI:74269"/>
        <dbReference type="ChEBI" id="CHEBI:74481"/>
        <dbReference type="EC" id="2.1.1.174"/>
    </reaction>
</comment>
<comment type="subcellular location">
    <subcellularLocation>
        <location evidence="1">Cytoplasm</location>
    </subcellularLocation>
</comment>
<comment type="similarity">
    <text evidence="1">Belongs to the methyltransferase superfamily. RlmG family.</text>
</comment>
<comment type="sequence caution" evidence="2">
    <conflict type="erroneous initiation">
        <sequence resource="EMBL-CDS" id="ABF05182"/>
    </conflict>
</comment>
<evidence type="ECO:0000255" key="1">
    <source>
        <dbReference type="HAMAP-Rule" id="MF_01859"/>
    </source>
</evidence>
<evidence type="ECO:0000305" key="2"/>
<keyword id="KW-0963">Cytoplasm</keyword>
<keyword id="KW-0489">Methyltransferase</keyword>
<keyword id="KW-0698">rRNA processing</keyword>
<keyword id="KW-0949">S-adenosyl-L-methionine</keyword>
<keyword id="KW-0808">Transferase</keyword>